<evidence type="ECO:0000255" key="1">
    <source>
        <dbReference type="HAMAP-Rule" id="MF_01385"/>
    </source>
</evidence>
<evidence type="ECO:0000305" key="2"/>
<dbReference type="EMBL" id="CP000526">
    <property type="protein sequence ID" value="ABM52689.1"/>
    <property type="status" value="ALT_INIT"/>
    <property type="molecule type" value="Genomic_DNA"/>
</dbReference>
<dbReference type="RefSeq" id="WP_004533998.1">
    <property type="nucleotide sequence ID" value="NC_008785.1"/>
</dbReference>
<dbReference type="SMR" id="A1V1G4"/>
<dbReference type="KEGG" id="bmv:BMASAVP1_A0721"/>
<dbReference type="HOGENOM" id="CLU_049215_2_1_4"/>
<dbReference type="GO" id="GO:0005737">
    <property type="term" value="C:cytoplasm"/>
    <property type="evidence" value="ECO:0007669"/>
    <property type="project" value="UniProtKB-SubCell"/>
</dbReference>
<dbReference type="GO" id="GO:0016151">
    <property type="term" value="F:nickel cation binding"/>
    <property type="evidence" value="ECO:0007669"/>
    <property type="project" value="UniProtKB-UniRule"/>
</dbReference>
<dbReference type="Gene3D" id="1.10.4190.10">
    <property type="entry name" value="Urease accessory protein UreF"/>
    <property type="match status" value="1"/>
</dbReference>
<dbReference type="HAMAP" id="MF_01385">
    <property type="entry name" value="UreF"/>
    <property type="match status" value="1"/>
</dbReference>
<dbReference type="InterPro" id="IPR002639">
    <property type="entry name" value="UreF"/>
</dbReference>
<dbReference type="InterPro" id="IPR038277">
    <property type="entry name" value="UreF_sf"/>
</dbReference>
<dbReference type="PANTHER" id="PTHR33620">
    <property type="entry name" value="UREASE ACCESSORY PROTEIN F"/>
    <property type="match status" value="1"/>
</dbReference>
<dbReference type="PANTHER" id="PTHR33620:SF1">
    <property type="entry name" value="UREASE ACCESSORY PROTEIN F"/>
    <property type="match status" value="1"/>
</dbReference>
<dbReference type="Pfam" id="PF01730">
    <property type="entry name" value="UreF"/>
    <property type="match status" value="1"/>
</dbReference>
<dbReference type="PIRSF" id="PIRSF009467">
    <property type="entry name" value="Ureas_acces_UreF"/>
    <property type="match status" value="1"/>
</dbReference>
<proteinExistence type="inferred from homology"/>
<sequence length="226" mass="23958">MDTAELVALLHLASPALPIGAFSYSQGLEAALDAPLIRDADGARDWIASGLADVLAQGELPFLAHQLARWHAHDAAALADANDEFVASRESFELRRETEQMGWSLAQLCASLEWGDAARRATLASIPSVALPSAFAFAAAAHGATPDAALAAYAFGWVENQTAAAIKAVPLGQLAGQKIIVALREPIRDAVRRALATPPEAINTFAPQLGILSARHESQYSRLFRS</sequence>
<comment type="function">
    <text evidence="1">Required for maturation of urease via the functional incorporation of the urease nickel metallocenter.</text>
</comment>
<comment type="subunit">
    <text evidence="1">UreD, UreF and UreG form a complex that acts as a GTP-hydrolysis-dependent molecular chaperone, activating the urease apoprotein by helping to assemble the nickel containing metallocenter of UreC. The UreE protein probably delivers the nickel.</text>
</comment>
<comment type="subcellular location">
    <subcellularLocation>
        <location evidence="1">Cytoplasm</location>
    </subcellularLocation>
</comment>
<comment type="similarity">
    <text evidence="1">Belongs to the UreF family.</text>
</comment>
<comment type="sequence caution" evidence="2">
    <conflict type="erroneous initiation">
        <sequence resource="EMBL-CDS" id="ABM52689"/>
    </conflict>
</comment>
<organism>
    <name type="scientific">Burkholderia mallei (strain SAVP1)</name>
    <dbReference type="NCBI Taxonomy" id="320388"/>
    <lineage>
        <taxon>Bacteria</taxon>
        <taxon>Pseudomonadati</taxon>
        <taxon>Pseudomonadota</taxon>
        <taxon>Betaproteobacteria</taxon>
        <taxon>Burkholderiales</taxon>
        <taxon>Burkholderiaceae</taxon>
        <taxon>Burkholderia</taxon>
        <taxon>pseudomallei group</taxon>
    </lineage>
</organism>
<gene>
    <name evidence="1" type="primary">ureF</name>
    <name type="ordered locus">BMASAVP1_A0721</name>
</gene>
<protein>
    <recommendedName>
        <fullName evidence="1">Urease accessory protein UreF</fullName>
    </recommendedName>
</protein>
<accession>A1V1G4</accession>
<reference key="1">
    <citation type="journal article" date="2010" name="Genome Biol. Evol.">
        <title>Continuing evolution of Burkholderia mallei through genome reduction and large-scale rearrangements.</title>
        <authorList>
            <person name="Losada L."/>
            <person name="Ronning C.M."/>
            <person name="DeShazer D."/>
            <person name="Woods D."/>
            <person name="Fedorova N."/>
            <person name="Kim H.S."/>
            <person name="Shabalina S.A."/>
            <person name="Pearson T.R."/>
            <person name="Brinkac L."/>
            <person name="Tan P."/>
            <person name="Nandi T."/>
            <person name="Crabtree J."/>
            <person name="Badger J."/>
            <person name="Beckstrom-Sternberg S."/>
            <person name="Saqib M."/>
            <person name="Schutzer S.E."/>
            <person name="Keim P."/>
            <person name="Nierman W.C."/>
        </authorList>
    </citation>
    <scope>NUCLEOTIDE SEQUENCE [LARGE SCALE GENOMIC DNA]</scope>
    <source>
        <strain>SAVP1</strain>
    </source>
</reference>
<feature type="chain" id="PRO_0000344103" description="Urease accessory protein UreF">
    <location>
        <begin position="1"/>
        <end position="226"/>
    </location>
</feature>
<keyword id="KW-0143">Chaperone</keyword>
<keyword id="KW-0963">Cytoplasm</keyword>
<keyword id="KW-0996">Nickel insertion</keyword>
<name>UREF_BURMS</name>